<accession>P12418</accession>
<accession>A4ZY23</accession>
<accession>Q71M35</accession>
<accession>Q8QT10</accession>
<organismHost>
    <name type="scientific">Mammalia</name>
    <dbReference type="NCBI Taxonomy" id="40674"/>
</organismHost>
<keyword id="KW-0167">Capsid protein</keyword>
<keyword id="KW-1035">Host cytoplasm</keyword>
<keyword id="KW-1037">Host cytoskeleton</keyword>
<keyword id="KW-0945">Host-virus interaction</keyword>
<keyword id="KW-1090">Inhibition of host innate immune response by virus</keyword>
<keyword id="KW-1114">Inhibition of host interferon signaling pathway by virus</keyword>
<keyword id="KW-1094">Inhibition of host IRF9 by virus</keyword>
<keyword id="KW-0922">Interferon antiviral system evasion</keyword>
<keyword id="KW-0899">Viral immunoevasion</keyword>
<keyword id="KW-0946">Virion</keyword>
<name>MU2_REOVD</name>
<dbReference type="EMBL" id="M27261">
    <property type="protein sequence ID" value="AAA47256.1"/>
    <property type="molecule type" value="Genomic_RNA"/>
</dbReference>
<dbReference type="EMBL" id="AF461683">
    <property type="protein sequence ID" value="AAL99937.1"/>
    <property type="molecule type" value="mRNA"/>
</dbReference>
<dbReference type="EMBL" id="AF461684">
    <property type="protein sequence ID" value="AAL99938.1"/>
    <property type="molecule type" value="mRNA"/>
</dbReference>
<dbReference type="EMBL" id="AY551083">
    <property type="protein sequence ID" value="AAS55892.1"/>
    <property type="molecule type" value="mRNA"/>
</dbReference>
<dbReference type="EMBL" id="EF494438">
    <property type="protein sequence ID" value="ABP48916.1"/>
    <property type="molecule type" value="Genomic_RNA"/>
</dbReference>
<dbReference type="PIR" id="A30179">
    <property type="entry name" value="M4XR3D"/>
</dbReference>
<dbReference type="SMR" id="P12418"/>
<dbReference type="IntAct" id="P12418">
    <property type="interactions" value="9"/>
</dbReference>
<dbReference type="Proteomes" id="UP000006373">
    <property type="component" value="Genome"/>
</dbReference>
<dbReference type="Proteomes" id="UP000165799">
    <property type="component" value="Genome"/>
</dbReference>
<dbReference type="GO" id="GO:0030430">
    <property type="term" value="C:host cell cytoplasm"/>
    <property type="evidence" value="ECO:0007669"/>
    <property type="project" value="UniProtKB-KW"/>
</dbReference>
<dbReference type="GO" id="GO:0044163">
    <property type="term" value="C:host cytoskeleton"/>
    <property type="evidence" value="ECO:0007669"/>
    <property type="project" value="UniProtKB-SubCell"/>
</dbReference>
<dbReference type="GO" id="GO:0019028">
    <property type="term" value="C:viral capsid"/>
    <property type="evidence" value="ECO:0007669"/>
    <property type="project" value="UniProtKB-KW"/>
</dbReference>
<dbReference type="GO" id="GO:0005198">
    <property type="term" value="F:structural molecule activity"/>
    <property type="evidence" value="ECO:0007669"/>
    <property type="project" value="InterPro"/>
</dbReference>
<dbReference type="GO" id="GO:0039560">
    <property type="term" value="P:symbiont-mediated suppression of host JAK-STAT cascade via inhibition of host IRF9 activity"/>
    <property type="evidence" value="ECO:0007669"/>
    <property type="project" value="UniProtKB-KW"/>
</dbReference>
<dbReference type="GO" id="GO:0039502">
    <property type="term" value="P:symbiont-mediated suppression of host type I interferon-mediated signaling pathway"/>
    <property type="evidence" value="ECO:0007669"/>
    <property type="project" value="UniProtKB-KW"/>
</dbReference>
<dbReference type="InterPro" id="IPR012494">
    <property type="entry name" value="Reovirus_Mu2"/>
</dbReference>
<dbReference type="Pfam" id="PF07781">
    <property type="entry name" value="Reovirus_Mu2"/>
    <property type="match status" value="1"/>
</dbReference>
<comment type="function">
    <text evidence="1">Minor inner capsid (core) component. Displays NTPase and RNA 5'-triphosphatase (RTPase) activities. ATP is the preferred substrate for hydrolysis. May function as a cofactor of polymerase lambda-3. Associates with microtubules and plays a role in the formation, structural organization and morphology of viral inclusions, where the assembly of cores and the replication of viral RNA occur. Together with mu-NS, recruits the other core proteins to these inclusions (By similarity).</text>
</comment>
<comment type="cofactor">
    <cofactor evidence="1">
        <name>a divalent metal cation</name>
        <dbReference type="ChEBI" id="CHEBI:60240"/>
    </cofactor>
</comment>
<comment type="subunit">
    <text evidence="1">Interacts with protein mu-NS; in viral inclusions. Interacts with polymerase lambda-3; this interaction stimulates the ATPase activity of mu-2 (By similarity).</text>
</comment>
<comment type="subcellular location">
    <subcellularLocation>
        <location evidence="3">Virion</location>
    </subcellularLocation>
    <subcellularLocation>
        <location evidence="2">Host cytoplasm</location>
        <location evidence="2">Host cytoskeleton</location>
    </subcellularLocation>
    <text>Found in the inner capsid (12 copies).</text>
</comment>
<comment type="similarity">
    <text evidence="3">Belongs to the orthoreovirus mu-2 protein family.</text>
</comment>
<protein>
    <recommendedName>
        <fullName>Microtubule-associated protein mu-2</fullName>
        <shortName>Mu2</shortName>
    </recommendedName>
</protein>
<reference key="1">
    <citation type="journal article" date="1989" name="Virology">
        <title>The sequences of reovirus serotype 3 genome segments M1 and M3 encoding the minor protein mu 2 and the major nonstructural protein mu NS, respectively.</title>
        <authorList>
            <person name="Wiener J.R."/>
            <person name="Bartlett J.A."/>
            <person name="Joklik W.K."/>
        </authorList>
    </citation>
    <scope>NUCLEOTIDE SEQUENCE [GENOMIC RNA]</scope>
</reference>
<reference key="2">
    <citation type="journal article" date="2002" name="J. Virol.">
        <title>Reovirus core protein mu2 determines the filamentous morphology of viral inclusion bodies by interacting with and stabilizing microtubules.</title>
        <authorList>
            <person name="Parker J.S.L."/>
            <person name="Broering T.J."/>
            <person name="Kim J."/>
            <person name="Higgins D.E."/>
            <person name="Nibert M.L."/>
        </authorList>
    </citation>
    <scope>NUCLEOTIDE SEQUENCE [MRNA]</scope>
    <scope>SUBCELLULAR LOCATION</scope>
    <scope>MUTAGENESIS OF PRO-208</scope>
    <source>
        <strain>Isolate T3/Human/Ohio/1955</strain>
    </source>
</reference>
<reference key="3">
    <citation type="journal article" date="2004" name="Virol. J.">
        <title>Comparisons of the M1 genome segments and encoded mu2 proteins of different reovirus isolates.</title>
        <authorList>
            <person name="Yin P."/>
            <person name="Keirstead N.D."/>
            <person name="Broering T.J."/>
            <person name="Arnold M.M."/>
            <person name="Parker J.S.L."/>
            <person name="Nibert M.L."/>
            <person name="Coombs K.M."/>
        </authorList>
    </citation>
    <scope>NUCLEOTIDE SEQUENCE [MRNA]</scope>
    <source>
        <strain>Isolate T3/Human/Washington</strain>
    </source>
</reference>
<reference key="4">
    <citation type="journal article" date="2007" name="Cell Host Microbe">
        <title>A plasmid-based reverse genetics system for animal double-stranded RNA viruses.</title>
        <authorList>
            <person name="Kobayashi T."/>
            <person name="Antar A.A."/>
            <person name="Boehme K.W."/>
            <person name="Danthi P."/>
            <person name="Eby E.A."/>
            <person name="Guglielmi K.M."/>
            <person name="Holm G.H."/>
            <person name="Johnson E.M."/>
            <person name="Maginnis M.S."/>
            <person name="Naik S."/>
            <person name="Skelton W.B."/>
            <person name="Wetzel J.D."/>
            <person name="Wilson G.J."/>
            <person name="Chappell J.D."/>
            <person name="Dermody T.S."/>
        </authorList>
    </citation>
    <scope>NUCLEOTIDE SEQUENCE [GENOMIC RNA]</scope>
    <source>
        <strain>Infectious clone</strain>
    </source>
</reference>
<sequence length="736" mass="83276">MAYIAVPAVVDSRSSEAIGLLESFGVDAGADANDVSYQDHDYVLDQLQYMLDGYEAGDVIDALVHKNWLHHSVYCLLPPKSQLLEYWKSNPSAIPDNVDRRLRKRLMLKKDLRKDDEYNQLARAFKISDVYAPLISSTTSPMTMIQNLNRGEIVYTTTDRVIGARILLYAPRKYYASTLSFTMTKCIIPFGKEVGRVPHSRFNVGTFPSIATPKCFVMSGVDIESIPNEFIKLFYQRVKSVHANILNDISPQIVSDMINRKRLRVHTPSDRRAAQLMHLPYHVKRGASHVDVYKVDVVDMLFEVVDVADGLRNVSRKLTMHTVPVCILEMLGIEIADYCIRQEDGMLTDWFLLLTMLSDGLTDRRTHCQYLMNPSSVPPDVILNISITGFINRHTIDVMPDIYDFVKPIGAVLPKGSFKSTIMRVLDSISILGIQIMPRAHVVDSDEVGEQMEPTFEQAVMEIYKGIAGVDSLDDLIKWVLNSDLIPHDDRLGQLFQAFLPLAKDLLAPMARKFYDNSMSEGRLLTFAHADSELLNANYFGHLLRLKIPYITEVNLMIRKNREGGELFQLVLSYLYKMYATSAQPKWFGSLLRLLICPWLHMEKLIGEADPASTSAEIGWHIPREQLMQDGWCGCEDGFIPYVSIRAPRLVIEELMEKNWGQYHAQVIVTDQLVVGEPRRVSAKAVIKGNHLPVKLVSRFACFTLTAKYEMRLSCGHSTGRGAAYSARLAFRSDLA</sequence>
<gene>
    <name type="primary">M1</name>
</gene>
<feature type="chain" id="PRO_0000222746" description="Microtubule-associated protein mu-2">
    <location>
        <begin position="1"/>
        <end position="736"/>
    </location>
</feature>
<feature type="mutagenesis site" description="Loss of filamentous subcellular location." evidence="2">
    <original>P</original>
    <variation>S</variation>
    <location>
        <position position="208"/>
    </location>
</feature>
<feature type="sequence conflict" description="In Ref. 2; AAL99937, 3; AAS55892 and 4; ABP48916." evidence="3" ref="2 3 4">
    <original>R</original>
    <variation>Q</variation>
    <location>
        <position position="150"/>
    </location>
</feature>
<feature type="sequence conflict" description="In Ref. 2; AAL99937, 3; AAS55892 and 4; ABP48916." evidence="3" ref="2 3 4">
    <original>P</original>
    <variation>S</variation>
    <location>
        <position position="208"/>
    </location>
</feature>
<feature type="sequence conflict" description="In Ref. 4; ABP48916." evidence="3" ref="4">
    <original>Q</original>
    <variation>R</variation>
    <location>
        <position position="342"/>
    </location>
</feature>
<feature type="sequence conflict" description="In Ref. 2; AAL99937, 3; AAS55892 and 4; ABP48916." evidence="3" ref="2 3 4">
    <original>M</original>
    <variation>I</variation>
    <location>
        <position position="372"/>
    </location>
</feature>
<proteinExistence type="evidence at protein level"/>
<organism>
    <name type="scientific">Reovirus type 3 (strain Dearing)</name>
    <name type="common">T3D</name>
    <name type="synonym">Mammalian orthoreovirus 3</name>
    <dbReference type="NCBI Taxonomy" id="10886"/>
    <lineage>
        <taxon>Viruses</taxon>
        <taxon>Riboviria</taxon>
        <taxon>Orthornavirae</taxon>
        <taxon>Duplornaviricota</taxon>
        <taxon>Resentoviricetes</taxon>
        <taxon>Reovirales</taxon>
        <taxon>Spinareoviridae</taxon>
        <taxon>Orthoreovirus</taxon>
        <taxon>Mammalian orthoreovirus</taxon>
    </lineage>
</organism>
<evidence type="ECO:0000250" key="1"/>
<evidence type="ECO:0000269" key="2">
    <source>
    </source>
</evidence>
<evidence type="ECO:0000305" key="3"/>